<proteinExistence type="evidence at transcript level"/>
<dbReference type="EC" id="1.14.-.-"/>
<dbReference type="EMBL" id="AB023038">
    <property type="protein sequence ID" value="BAB02401.1"/>
    <property type="molecule type" value="Genomic_DNA"/>
</dbReference>
<dbReference type="EMBL" id="CP002686">
    <property type="protein sequence ID" value="AEE75556.1"/>
    <property type="molecule type" value="Genomic_DNA"/>
</dbReference>
<dbReference type="EMBL" id="AY050827">
    <property type="protein sequence ID" value="AAK92762.1"/>
    <property type="molecule type" value="mRNA"/>
</dbReference>
<dbReference type="EMBL" id="AY096748">
    <property type="protein sequence ID" value="AAM20382.1"/>
    <property type="molecule type" value="mRNA"/>
</dbReference>
<dbReference type="RefSeq" id="NP_188087.1">
    <property type="nucleotide sequence ID" value="NM_112330.4"/>
</dbReference>
<dbReference type="SMR" id="Q9LUC5"/>
<dbReference type="FunCoup" id="Q9LUC5">
    <property type="interactions" value="448"/>
</dbReference>
<dbReference type="STRING" id="3702.Q9LUC5"/>
<dbReference type="MetOSite" id="Q9LUC5"/>
<dbReference type="PaxDb" id="3702-AT3G14690.1"/>
<dbReference type="ProteomicsDB" id="240270"/>
<dbReference type="EnsemblPlants" id="AT3G14690.1">
    <property type="protein sequence ID" value="AT3G14690.1"/>
    <property type="gene ID" value="AT3G14690"/>
</dbReference>
<dbReference type="GeneID" id="820697"/>
<dbReference type="Gramene" id="AT3G14690.1">
    <property type="protein sequence ID" value="AT3G14690.1"/>
    <property type="gene ID" value="AT3G14690"/>
</dbReference>
<dbReference type="KEGG" id="ath:AT3G14690"/>
<dbReference type="Araport" id="AT3G14690"/>
<dbReference type="TAIR" id="AT3G14690">
    <property type="gene designation" value="CYP72A15"/>
</dbReference>
<dbReference type="eggNOG" id="KOG0157">
    <property type="taxonomic scope" value="Eukaryota"/>
</dbReference>
<dbReference type="HOGENOM" id="CLU_001570_5_0_1"/>
<dbReference type="InParanoid" id="Q9LUC5"/>
<dbReference type="OrthoDB" id="1470350at2759"/>
<dbReference type="PhylomeDB" id="Q9LUC5"/>
<dbReference type="PRO" id="PR:Q9LUC5"/>
<dbReference type="Proteomes" id="UP000006548">
    <property type="component" value="Chromosome 3"/>
</dbReference>
<dbReference type="ExpressionAtlas" id="Q9LUC5">
    <property type="expression patterns" value="baseline and differential"/>
</dbReference>
<dbReference type="GO" id="GO:0005829">
    <property type="term" value="C:cytosol"/>
    <property type="evidence" value="ECO:0007005"/>
    <property type="project" value="TAIR"/>
</dbReference>
<dbReference type="GO" id="GO:0016020">
    <property type="term" value="C:membrane"/>
    <property type="evidence" value="ECO:0007669"/>
    <property type="project" value="UniProtKB-SubCell"/>
</dbReference>
<dbReference type="GO" id="GO:0020037">
    <property type="term" value="F:heme binding"/>
    <property type="evidence" value="ECO:0007669"/>
    <property type="project" value="InterPro"/>
</dbReference>
<dbReference type="GO" id="GO:0005506">
    <property type="term" value="F:iron ion binding"/>
    <property type="evidence" value="ECO:0007669"/>
    <property type="project" value="InterPro"/>
</dbReference>
<dbReference type="GO" id="GO:0004497">
    <property type="term" value="F:monooxygenase activity"/>
    <property type="evidence" value="ECO:0007669"/>
    <property type="project" value="UniProtKB-KW"/>
</dbReference>
<dbReference type="GO" id="GO:0016705">
    <property type="term" value="F:oxidoreductase activity, acting on paired donors, with incorporation or reduction of molecular oxygen"/>
    <property type="evidence" value="ECO:0007669"/>
    <property type="project" value="InterPro"/>
</dbReference>
<dbReference type="CDD" id="cd20642">
    <property type="entry name" value="CYP72"/>
    <property type="match status" value="1"/>
</dbReference>
<dbReference type="FunFam" id="1.10.630.10:FF:000029">
    <property type="entry name" value="Cytochrome P450 734A1"/>
    <property type="match status" value="1"/>
</dbReference>
<dbReference type="Gene3D" id="1.10.630.10">
    <property type="entry name" value="Cytochrome P450"/>
    <property type="match status" value="1"/>
</dbReference>
<dbReference type="InterPro" id="IPR001128">
    <property type="entry name" value="Cyt_P450"/>
</dbReference>
<dbReference type="InterPro" id="IPR002401">
    <property type="entry name" value="Cyt_P450_E_grp-I"/>
</dbReference>
<dbReference type="InterPro" id="IPR036396">
    <property type="entry name" value="Cyt_P450_sf"/>
</dbReference>
<dbReference type="InterPro" id="IPR050665">
    <property type="entry name" value="Cytochrome_P450_Monooxygen"/>
</dbReference>
<dbReference type="PANTHER" id="PTHR24282:SF255">
    <property type="entry name" value="CYTOCHROME P450 72A11-RELATED"/>
    <property type="match status" value="1"/>
</dbReference>
<dbReference type="PANTHER" id="PTHR24282">
    <property type="entry name" value="CYTOCHROME P450 FAMILY MEMBER"/>
    <property type="match status" value="1"/>
</dbReference>
<dbReference type="Pfam" id="PF00067">
    <property type="entry name" value="p450"/>
    <property type="match status" value="1"/>
</dbReference>
<dbReference type="PRINTS" id="PR00463">
    <property type="entry name" value="EP450I"/>
</dbReference>
<dbReference type="PRINTS" id="PR00385">
    <property type="entry name" value="P450"/>
</dbReference>
<dbReference type="SUPFAM" id="SSF48264">
    <property type="entry name" value="Cytochrome P450"/>
    <property type="match status" value="1"/>
</dbReference>
<comment type="cofactor">
    <cofactor evidence="1">
        <name>heme</name>
        <dbReference type="ChEBI" id="CHEBI:30413"/>
    </cofactor>
</comment>
<comment type="subcellular location">
    <subcellularLocation>
        <location evidence="3">Membrane</location>
        <topology evidence="3">Single-pass membrane protein</topology>
    </subcellularLocation>
</comment>
<comment type="similarity">
    <text evidence="3">Belongs to the cytochrome P450 family.</text>
</comment>
<accession>Q9LUC5</accession>
<protein>
    <recommendedName>
        <fullName>Cytochrome P450 72A15</fullName>
        <ecNumber>1.14.-.-</ecNumber>
    </recommendedName>
</protein>
<reference key="1">
    <citation type="journal article" date="2000" name="DNA Res.">
        <title>Structural analysis of Arabidopsis thaliana chromosome 3. I. Sequence features of the regions of 4,504,864 bp covered by sixty P1 and TAC clones.</title>
        <authorList>
            <person name="Sato S."/>
            <person name="Nakamura Y."/>
            <person name="Kaneko T."/>
            <person name="Katoh T."/>
            <person name="Asamizu E."/>
            <person name="Tabata S."/>
        </authorList>
    </citation>
    <scope>NUCLEOTIDE SEQUENCE [LARGE SCALE GENOMIC DNA]</scope>
    <source>
        <strain>cv. Columbia</strain>
    </source>
</reference>
<reference key="2">
    <citation type="journal article" date="2017" name="Plant J.">
        <title>Araport11: a complete reannotation of the Arabidopsis thaliana reference genome.</title>
        <authorList>
            <person name="Cheng C.Y."/>
            <person name="Krishnakumar V."/>
            <person name="Chan A.P."/>
            <person name="Thibaud-Nissen F."/>
            <person name="Schobel S."/>
            <person name="Town C.D."/>
        </authorList>
    </citation>
    <scope>GENOME REANNOTATION</scope>
    <source>
        <strain>cv. Columbia</strain>
    </source>
</reference>
<reference key="3">
    <citation type="journal article" date="2003" name="Science">
        <title>Empirical analysis of transcriptional activity in the Arabidopsis genome.</title>
        <authorList>
            <person name="Yamada K."/>
            <person name="Lim J."/>
            <person name="Dale J.M."/>
            <person name="Chen H."/>
            <person name="Shinn P."/>
            <person name="Palm C.J."/>
            <person name="Southwick A.M."/>
            <person name="Wu H.C."/>
            <person name="Kim C.J."/>
            <person name="Nguyen M."/>
            <person name="Pham P.K."/>
            <person name="Cheuk R.F."/>
            <person name="Karlin-Newmann G."/>
            <person name="Liu S.X."/>
            <person name="Lam B."/>
            <person name="Sakano H."/>
            <person name="Wu T."/>
            <person name="Yu G."/>
            <person name="Miranda M."/>
            <person name="Quach H.L."/>
            <person name="Tripp M."/>
            <person name="Chang C.H."/>
            <person name="Lee J.M."/>
            <person name="Toriumi M.J."/>
            <person name="Chan M.M."/>
            <person name="Tang C.C."/>
            <person name="Onodera C.S."/>
            <person name="Deng J.M."/>
            <person name="Akiyama K."/>
            <person name="Ansari Y."/>
            <person name="Arakawa T."/>
            <person name="Banh J."/>
            <person name="Banno F."/>
            <person name="Bowser L."/>
            <person name="Brooks S.Y."/>
            <person name="Carninci P."/>
            <person name="Chao Q."/>
            <person name="Choy N."/>
            <person name="Enju A."/>
            <person name="Goldsmith A.D."/>
            <person name="Gurjal M."/>
            <person name="Hansen N.F."/>
            <person name="Hayashizaki Y."/>
            <person name="Johnson-Hopson C."/>
            <person name="Hsuan V.W."/>
            <person name="Iida K."/>
            <person name="Karnes M."/>
            <person name="Khan S."/>
            <person name="Koesema E."/>
            <person name="Ishida J."/>
            <person name="Jiang P.X."/>
            <person name="Jones T."/>
            <person name="Kawai J."/>
            <person name="Kamiya A."/>
            <person name="Meyers C."/>
            <person name="Nakajima M."/>
            <person name="Narusaka M."/>
            <person name="Seki M."/>
            <person name="Sakurai T."/>
            <person name="Satou M."/>
            <person name="Tamse R."/>
            <person name="Vaysberg M."/>
            <person name="Wallender E.K."/>
            <person name="Wong C."/>
            <person name="Yamamura Y."/>
            <person name="Yuan S."/>
            <person name="Shinozaki K."/>
            <person name="Davis R.W."/>
            <person name="Theologis A."/>
            <person name="Ecker J.R."/>
        </authorList>
    </citation>
    <scope>NUCLEOTIDE SEQUENCE [LARGE SCALE MRNA]</scope>
    <source>
        <strain>cv. Columbia</strain>
    </source>
</reference>
<gene>
    <name type="primary">CYP72A15</name>
    <name type="ordered locus">At3g14690</name>
    <name type="ORF">MIE1.20</name>
</gene>
<feature type="chain" id="PRO_0000425858" description="Cytochrome P450 72A15">
    <location>
        <begin position="1"/>
        <end position="512"/>
    </location>
</feature>
<feature type="transmembrane region" description="Helical" evidence="2">
    <location>
        <begin position="2"/>
        <end position="22"/>
    </location>
</feature>
<feature type="binding site" description="axial binding residue" evidence="1">
    <location>
        <position position="460"/>
    </location>
    <ligand>
        <name>heme</name>
        <dbReference type="ChEBI" id="CHEBI:30413"/>
    </ligand>
    <ligandPart>
        <name>Fe</name>
        <dbReference type="ChEBI" id="CHEBI:18248"/>
    </ligandPart>
</feature>
<name>C7A15_ARATH</name>
<evidence type="ECO:0000250" key="1"/>
<evidence type="ECO:0000255" key="2"/>
<evidence type="ECO:0000305" key="3"/>
<organism>
    <name type="scientific">Arabidopsis thaliana</name>
    <name type="common">Mouse-ear cress</name>
    <dbReference type="NCBI Taxonomy" id="3702"/>
    <lineage>
        <taxon>Eukaryota</taxon>
        <taxon>Viridiplantae</taxon>
        <taxon>Streptophyta</taxon>
        <taxon>Embryophyta</taxon>
        <taxon>Tracheophyta</taxon>
        <taxon>Spermatophyta</taxon>
        <taxon>Magnoliopsida</taxon>
        <taxon>eudicotyledons</taxon>
        <taxon>Gunneridae</taxon>
        <taxon>Pentapetalae</taxon>
        <taxon>rosids</taxon>
        <taxon>malvids</taxon>
        <taxon>Brassicales</taxon>
        <taxon>Brassicaceae</taxon>
        <taxon>Camelineae</taxon>
        <taxon>Arabidopsis</taxon>
    </lineage>
</organism>
<sequence length="512" mass="58442">MEISVASVTISVVLAVVSWWIWRTLQWVWFKPKMLEHYLRRQGLAGTPYTPLVGDLKKNFTMLSEARSKPLKLTDDISPRVVPYPLQMFKTYGRTYFTWFGPIPTITIMDPEQIKEVFNKVYDFQKPHTFPLATIIAKGLANYDGDKWAKHRRIINPAFHIEKIKNMVPAFHQSCREVVGEWDQLVSDKGSSCEVDVWPGLVSMTADVISRTAFGSSYKEGQRIFELQAELAQLIIQAFRKAFIPGYSYLPTKSNRRMKAAAREIQVILRGIVNKRLRAREAGEAPSDDLLGILLESNLRQTEGNGMSTEDLMEECKLFYFAGQETTSVLLVWTMVLLSQHQDWQARAREEVKQVFGDKEPDAEGLNQLKVMTMILYEVLRLYPPVTQLTRAIHKELKLGDLTLPGGVQISLPILLVQHDIELWGNDAAEFNPDRFKDGLSKATKSQVSFFPFAWGPRICIGQNFALLEAKMAMALILRRFSFEISPSYVHAPYTVITIHPQFGAQLIMHKL</sequence>
<keyword id="KW-0349">Heme</keyword>
<keyword id="KW-0408">Iron</keyword>
<keyword id="KW-0472">Membrane</keyword>
<keyword id="KW-0479">Metal-binding</keyword>
<keyword id="KW-0503">Monooxygenase</keyword>
<keyword id="KW-0560">Oxidoreductase</keyword>
<keyword id="KW-1185">Reference proteome</keyword>
<keyword id="KW-0812">Transmembrane</keyword>
<keyword id="KW-1133">Transmembrane helix</keyword>